<keyword id="KW-0002">3D-structure</keyword>
<keyword id="KW-0024">Alternative initiation</keyword>
<keyword id="KW-0025">Alternative splicing</keyword>
<keyword id="KW-0167">Capsid protein</keyword>
<keyword id="KW-1015">Disulfide bond</keyword>
<keyword id="KW-1048">Host nucleus</keyword>
<keyword id="KW-0945">Host-virus interaction</keyword>
<keyword id="KW-0426">Late protein</keyword>
<keyword id="KW-0597">Phosphoprotein</keyword>
<keyword id="KW-1145">T=7 icosahedral capsid protein</keyword>
<keyword id="KW-1161">Viral attachment to host cell</keyword>
<keyword id="KW-1162">Viral penetration into host cytoplasm</keyword>
<keyword id="KW-0946">Virion</keyword>
<keyword id="KW-1164">Virus endocytosis by host</keyword>
<keyword id="KW-1160">Virus entry into host cell</keyword>
<accession>P04010</accession>
<reference key="1">
    <citation type="journal article" date="1985" name="Virology">
        <title>Complete DNA sequence of lymphotropic papovavirus: prototype of a new species of the polyomavirus genus.</title>
        <authorList>
            <person name="Pawlita M."/>
            <person name="Clad A."/>
            <person name="zur Hausen H."/>
        </authorList>
    </citation>
    <scope>NUCLEOTIDE SEQUENCE [GENOMIC DNA]</scope>
</reference>
<reference key="2">
    <citation type="submission" date="2013-08" db="EMBL/GenBank/DDBJ databases">
        <authorList>
            <person name="Pawlita M."/>
            <person name="Clad A."/>
            <person name="zur Hausen H."/>
        </authorList>
    </citation>
    <scope>SEQUENCE REVISION</scope>
</reference>
<reference key="3">
    <citation type="journal article" date="2009" name="Virology">
        <title>The Polyomaviridae: Contributions of virus structure to our understanding of virus receptors and infectious entry.</title>
        <authorList>
            <person name="Neu U."/>
            <person name="Stehle T."/>
            <person name="Atwood W.J."/>
        </authorList>
    </citation>
    <scope>REVIEW</scope>
</reference>
<proteinExistence type="evidence at protein level"/>
<protein>
    <recommendedName>
        <fullName>Major capsid protein VP1</fullName>
    </recommendedName>
    <alternativeName>
        <fullName>Major structural protein VP1</fullName>
    </alternativeName>
</protein>
<sequence>MAPQRKRQDGACKKTCPIPAPVPRLLVKGGVEVLEVRTGPDAITQIEAYLNPRMGNNIPSEDLYGYSNSINTAFSKASDTPNKDTLPCYSVAVIKLPLLNEDMTCDTILMWEAVSVKTEVVGISSLVNLHQGGKYIYGSSSGCVPVQGTTYHMFAVGGEPLELQGLVASSTATYPDDVVAIKNMKPGNQGLDPKAKALLDKDGKYPVEVWCPDPSKNENTRYYGSFTGGATTPPVMQFTNSVTTVLLDENGVGPLCKGDKLFLSCADIAGVHTNYSETQVWRGLPRYFNVTLRKRIVKNPYPVSSLLNSFFSGLMPQIQGQPMEGVSGQVEEVRIFEGTEGLPGDPDLNRYVDKFCQHQTVLPVSNDM</sequence>
<organism>
    <name type="scientific">B-lymphotropic polyomavirus</name>
    <name type="common">LPV</name>
    <dbReference type="NCBI Taxonomy" id="332091"/>
    <lineage>
        <taxon>Viruses</taxon>
        <taxon>Monodnaviria</taxon>
        <taxon>Shotokuvirae</taxon>
        <taxon>Cossaviricota</taxon>
        <taxon>Papovaviricetes</taxon>
        <taxon>Sepolyvirales</taxon>
        <taxon>Polyomaviridae</taxon>
        <taxon>African green monkey polyomavirus</taxon>
    </lineage>
</organism>
<evidence type="ECO:0000250" key="1"/>
<evidence type="ECO:0000250" key="2">
    <source>
        <dbReference type="UniProtKB" id="P03087"/>
    </source>
</evidence>
<evidence type="ECO:0000305" key="3"/>
<evidence type="ECO:0007829" key="4">
    <source>
        <dbReference type="PDB" id="4MBY"/>
    </source>
</evidence>
<organismHost>
    <name type="scientific">Chlorocebus aethiops</name>
    <name type="common">Green monkey</name>
    <name type="synonym">Cercopithecus aethiops</name>
    <dbReference type="NCBI Taxonomy" id="9534"/>
</organismHost>
<name>VP1_POVLY</name>
<dbReference type="EMBL" id="K02562">
    <property type="protein sequence ID" value="AAA47062.2"/>
    <property type="molecule type" value="Genomic_DNA"/>
</dbReference>
<dbReference type="PIR" id="A03627">
    <property type="entry name" value="VVVP1L"/>
</dbReference>
<dbReference type="RefSeq" id="NP_848007.2">
    <property type="nucleotide sequence ID" value="NC_004763.2"/>
</dbReference>
<dbReference type="PDB" id="4MBX">
    <property type="method" value="X-ray"/>
    <property type="resolution" value="1.92 A"/>
    <property type="chains" value="A/B/C/D/E/F/G/H/I/J=29-302"/>
</dbReference>
<dbReference type="PDB" id="4MBY">
    <property type="method" value="X-ray"/>
    <property type="resolution" value="1.48 A"/>
    <property type="chains" value="A/B/C/D/E/F/G/H/I/J=29-302"/>
</dbReference>
<dbReference type="PDB" id="4MBZ">
    <property type="method" value="X-ray"/>
    <property type="resolution" value="1.75 A"/>
    <property type="chains" value="A/B/C/D/E/F/G/H/I/J=29-302"/>
</dbReference>
<dbReference type="PDBsum" id="4MBX"/>
<dbReference type="PDBsum" id="4MBY"/>
<dbReference type="PDBsum" id="4MBZ"/>
<dbReference type="SMR" id="P04010"/>
<dbReference type="UniLectin" id="P04010"/>
<dbReference type="GeneID" id="1494437"/>
<dbReference type="KEGG" id="vg:1494437"/>
<dbReference type="EvolutionaryTrace" id="P04010"/>
<dbReference type="Proteomes" id="UP000126011">
    <property type="component" value="Segment"/>
</dbReference>
<dbReference type="GO" id="GO:0042025">
    <property type="term" value="C:host cell nucleus"/>
    <property type="evidence" value="ECO:0007669"/>
    <property type="project" value="UniProtKB-SubCell"/>
</dbReference>
<dbReference type="GO" id="GO:0039620">
    <property type="term" value="C:T=7 icosahedral viral capsid"/>
    <property type="evidence" value="ECO:0007669"/>
    <property type="project" value="UniProtKB-KW"/>
</dbReference>
<dbReference type="GO" id="GO:0005198">
    <property type="term" value="F:structural molecule activity"/>
    <property type="evidence" value="ECO:0007669"/>
    <property type="project" value="InterPro"/>
</dbReference>
<dbReference type="GO" id="GO:0075509">
    <property type="term" value="P:endocytosis involved in viral entry into host cell"/>
    <property type="evidence" value="ECO:0007669"/>
    <property type="project" value="UniProtKB-KW"/>
</dbReference>
<dbReference type="GO" id="GO:0019062">
    <property type="term" value="P:virion attachment to host cell"/>
    <property type="evidence" value="ECO:0007669"/>
    <property type="project" value="UniProtKB-KW"/>
</dbReference>
<dbReference type="Gene3D" id="2.60.175.10">
    <property type="entry name" value="Capsid protein VP1,Polyomavirus"/>
    <property type="match status" value="1"/>
</dbReference>
<dbReference type="InterPro" id="IPR000662">
    <property type="entry name" value="Capsid_VP1_Polyomavir"/>
</dbReference>
<dbReference type="InterPro" id="IPR011222">
    <property type="entry name" value="dsDNA_vir_gr_I_capsid"/>
</dbReference>
<dbReference type="InterPro" id="IPR036931">
    <property type="entry name" value="Polyomavir_VP1_sf"/>
</dbReference>
<dbReference type="Pfam" id="PF00718">
    <property type="entry name" value="Polyoma_coat"/>
    <property type="match status" value="1"/>
</dbReference>
<dbReference type="PIRSF" id="PIRSF003376">
    <property type="entry name" value="Capsid_VP1_Polyomavir"/>
    <property type="match status" value="1"/>
</dbReference>
<dbReference type="SUPFAM" id="SSF88648">
    <property type="entry name" value="Group I dsDNA viruses"/>
    <property type="match status" value="1"/>
</dbReference>
<feature type="chain" id="PRO_0000115022" description="Major capsid protein VP1">
    <location>
        <begin position="1"/>
        <end position="368"/>
    </location>
</feature>
<feature type="region of interest" description="C-terminal arm" evidence="2">
    <location>
        <begin position="303"/>
        <end position="368"/>
    </location>
</feature>
<feature type="short sequence motif" description="Bipartite nuclear localization signal" evidence="2">
    <location>
        <begin position="5"/>
        <end position="14"/>
    </location>
</feature>
<feature type="modified residue" description="Phosphothreonine; by host" evidence="1">
    <location>
        <position position="339"/>
    </location>
</feature>
<feature type="disulfide bond" description="Interchain (with C-105)" evidence="1">
    <location>
        <position position="105"/>
    </location>
</feature>
<feature type="strand" evidence="4">
    <location>
        <begin position="29"/>
        <end position="37"/>
    </location>
</feature>
<feature type="strand" evidence="4">
    <location>
        <begin position="43"/>
        <end position="50"/>
    </location>
</feature>
<feature type="strand" evidence="4">
    <location>
        <begin position="53"/>
        <end position="55"/>
    </location>
</feature>
<feature type="turn" evidence="4">
    <location>
        <begin position="62"/>
        <end position="65"/>
    </location>
</feature>
<feature type="strand" evidence="4">
    <location>
        <begin position="74"/>
        <end position="77"/>
    </location>
</feature>
<feature type="strand" evidence="4">
    <location>
        <begin position="90"/>
        <end position="95"/>
    </location>
</feature>
<feature type="strand" evidence="4">
    <location>
        <begin position="105"/>
        <end position="120"/>
    </location>
</feature>
<feature type="helix" evidence="4">
    <location>
        <begin position="123"/>
        <end position="126"/>
    </location>
</feature>
<feature type="strand" evidence="4">
    <location>
        <begin position="131"/>
        <end position="133"/>
    </location>
</feature>
<feature type="strand" evidence="4">
    <location>
        <begin position="135"/>
        <end position="138"/>
    </location>
</feature>
<feature type="strand" evidence="4">
    <location>
        <begin position="146"/>
        <end position="148"/>
    </location>
</feature>
<feature type="strand" evidence="4">
    <location>
        <begin position="150"/>
        <end position="159"/>
    </location>
</feature>
<feature type="strand" evidence="4">
    <location>
        <begin position="162"/>
        <end position="165"/>
    </location>
</feature>
<feature type="helix" evidence="4">
    <location>
        <begin position="186"/>
        <end position="189"/>
    </location>
</feature>
<feature type="strand" evidence="4">
    <location>
        <begin position="196"/>
        <end position="198"/>
    </location>
</feature>
<feature type="turn" evidence="4">
    <location>
        <begin position="207"/>
        <end position="209"/>
    </location>
</feature>
<feature type="strand" evidence="4">
    <location>
        <begin position="210"/>
        <end position="212"/>
    </location>
</feature>
<feature type="strand" evidence="4">
    <location>
        <begin position="220"/>
        <end position="227"/>
    </location>
</feature>
<feature type="strand" evidence="4">
    <location>
        <begin position="235"/>
        <end position="241"/>
    </location>
</feature>
<feature type="helix" evidence="4">
    <location>
        <begin position="257"/>
        <end position="259"/>
    </location>
</feature>
<feature type="strand" evidence="4">
    <location>
        <begin position="260"/>
        <end position="273"/>
    </location>
</feature>
<feature type="strand" evidence="4">
    <location>
        <begin position="279"/>
        <end position="283"/>
    </location>
</feature>
<feature type="strand" evidence="4">
    <location>
        <begin position="286"/>
        <end position="298"/>
    </location>
</feature>
<comment type="function">
    <text evidence="2">Forms an icosahedral capsid with a T=7 symmetry and a 40 nm diameter. The capsid is composed of 72 pentamers linked to each other by disulfide bonds and associated with VP2 or VP3 proteins. Interacts with a N-linked glycoprotein containing sialic acids on the cell surface to provide virion attachment to target cell. Once attached, the virion is internalized by endocytosis and traffics to the endoplasmic reticulum. Inside the endoplasmic reticulum, the protein folding machinery isomerizes VP1 interpentamer disulfide bonds, thereby triggering initial uncoating. Next, the virion uses the endoplasmic reticulum-associated degradation machinery to probably translocate in the cytosol before reaching the nucleus. Nuclear entry of the viral DNA involves the selective exposure and importin recognition of VP2/Vp3 nuclear localization signal. In late phase of infection, neo-synthesized VP1 encapsulates replicated genomic DNA in the nucleus, and participates in rearranging nucleosomes around the viral DNA.</text>
</comment>
<comment type="subunit">
    <text evidence="2">Homomultimer; disulfide-linked. The virus capsid is composed of 72 icosahedral units, each one composed of five disulfide-linked copies of VP1. Interacts with minor capsid proteins VP2 and VP3.</text>
</comment>
<comment type="subcellular location">
    <subcellularLocation>
        <location>Virion</location>
    </subcellularLocation>
    <subcellularLocation>
        <location evidence="2">Host nucleus</location>
    </subcellularLocation>
</comment>
<comment type="alternative products">
    <event type="alternative splicing"/>
    <event type="alternative initiation"/>
    <isoform>
        <id>P04010-1</id>
        <name>VP1</name>
        <sequence type="displayed"/>
    </isoform>
    <isoform>
        <id>P04011-1</id>
        <name>VP2</name>
        <name>Minor capsid protein VP2</name>
        <sequence type="external"/>
    </isoform>
    <isoform>
        <id>P04011-2</id>
        <name>VP3</name>
        <name>Minor capsid protein VP3</name>
        <sequence type="external"/>
    </isoform>
</comment>
<comment type="domain">
    <text evidence="2">A DNA-binding domain overlapping a bipartite nuclear localization signal is present in the N-terminal region of the protein and is required for efficient virus formation.</text>
</comment>
<comment type="domain">
    <text evidence="2">The intrinsically disordered C-terminal arm interacts with neighboring pentamers. The unstructured nature of this region allows to make different interactions depending on the structural context: pentamers present at the 12 icosahedral fivefold axes bind five pentamers, whereas pentamers present at the 60 icosahedral six-fold axes interact with six pentamers.</text>
</comment>
<comment type="miscellaneous">
    <molecule>Isoform VP1</molecule>
    <text>Produced by alternative splicing of the late mRNA.</text>
</comment>
<comment type="similarity">
    <text evidence="3">Belongs to the polyomaviruses coat protein VP1 family.</text>
</comment>